<gene>
    <name evidence="1" type="primary">rnz</name>
    <name type="ordered locus">PTO1273</name>
</gene>
<keyword id="KW-0255">Endonuclease</keyword>
<keyword id="KW-0378">Hydrolase</keyword>
<keyword id="KW-0479">Metal-binding</keyword>
<keyword id="KW-0540">Nuclease</keyword>
<keyword id="KW-0819">tRNA processing</keyword>
<keyword id="KW-0862">Zinc</keyword>
<protein>
    <recommendedName>
        <fullName evidence="1">Ribonuclease Z</fullName>
        <shortName evidence="1">RNase Z</shortName>
        <ecNumber evidence="1">3.1.26.11</ecNumber>
    </recommendedName>
    <alternativeName>
        <fullName evidence="1">tRNA 3 endonuclease</fullName>
    </alternativeName>
    <alternativeName>
        <fullName evidence="1">tRNase Z</fullName>
    </alternativeName>
</protein>
<sequence length="309" mass="35185">MASTFKITFLGTGGSVPKPGRGLPAIAVQVDNIVNLFDCGEGTQKQFMKSGVSFMNVKNIFISHFHGDHFFGLPGLLSTFSFNGRIDDLNIFGPPGTIDEIKKVLSLIDFKITYNIKIAEMEENKKYDFDLFDVYAIKNDHTKYGYSYKLKEKDLIKINREKADSIGFPKNKLELLRNNGEYYYMGKRYSIWDVADGIKPGRSIVYSGDTRPFNDMLKFASNCDVLIHDSTMDASIENLANEYGHSTARQAAEIALKANVKRLFLFHYSSRYNDLNLLLNEAKSIFNDSYLSREMLEFNVDKKTELIKI</sequence>
<evidence type="ECO:0000255" key="1">
    <source>
        <dbReference type="HAMAP-Rule" id="MF_01818"/>
    </source>
</evidence>
<name>RNZ_PICTO</name>
<comment type="function">
    <text evidence="1">Zinc phosphodiesterase, which displays some tRNA 3'-processing endonuclease activity. Probably involved in tRNA maturation, by removing a 3'-trailer from precursor tRNA.</text>
</comment>
<comment type="catalytic activity">
    <reaction evidence="1">
        <text>Endonucleolytic cleavage of RNA, removing extra 3' nucleotides from tRNA precursor, generating 3' termini of tRNAs. A 3'-hydroxy group is left at the tRNA terminus and a 5'-phosphoryl group is left at the trailer molecule.</text>
        <dbReference type="EC" id="3.1.26.11"/>
    </reaction>
</comment>
<comment type="cofactor">
    <cofactor evidence="1">
        <name>Zn(2+)</name>
        <dbReference type="ChEBI" id="CHEBI:29105"/>
    </cofactor>
    <text evidence="1">Binds 2 Zn(2+) ions.</text>
</comment>
<comment type="subunit">
    <text evidence="1">Homodimer.</text>
</comment>
<comment type="similarity">
    <text evidence="1">Belongs to the RNase Z family.</text>
</comment>
<reference key="1">
    <citation type="journal article" date="2004" name="Proc. Natl. Acad. Sci. U.S.A.">
        <title>Genome sequence of Picrophilus torridus and its implications for life around pH 0.</title>
        <authorList>
            <person name="Fuetterer O."/>
            <person name="Angelov A."/>
            <person name="Liesegang H."/>
            <person name="Gottschalk G."/>
            <person name="Schleper C."/>
            <person name="Schepers B."/>
            <person name="Dock C."/>
            <person name="Antranikian G."/>
            <person name="Liebl W."/>
        </authorList>
    </citation>
    <scope>NUCLEOTIDE SEQUENCE [LARGE SCALE GENOMIC DNA]</scope>
    <source>
        <strain>ATCC 700027 / DSM 9790 / JCM 10055 / NBRC 100828 / KAW 2/3</strain>
    </source>
</reference>
<dbReference type="EC" id="3.1.26.11" evidence="1"/>
<dbReference type="EMBL" id="AE017261">
    <property type="protein sequence ID" value="AAT43858.1"/>
    <property type="molecule type" value="Genomic_DNA"/>
</dbReference>
<dbReference type="RefSeq" id="WP_011178074.1">
    <property type="nucleotide sequence ID" value="NC_005877.1"/>
</dbReference>
<dbReference type="SMR" id="Q6KZJ4"/>
<dbReference type="FunCoup" id="Q6KZJ4">
    <property type="interactions" value="109"/>
</dbReference>
<dbReference type="STRING" id="263820.PTO1273"/>
<dbReference type="PaxDb" id="263820-PTO1273"/>
<dbReference type="GeneID" id="2845357"/>
<dbReference type="KEGG" id="pto:PTO1273"/>
<dbReference type="PATRIC" id="fig|263820.9.peg.1322"/>
<dbReference type="eggNOG" id="arCOG00501">
    <property type="taxonomic scope" value="Archaea"/>
</dbReference>
<dbReference type="HOGENOM" id="CLU_031317_2_1_2"/>
<dbReference type="InParanoid" id="Q6KZJ4"/>
<dbReference type="OrthoDB" id="85118at2157"/>
<dbReference type="Proteomes" id="UP000000438">
    <property type="component" value="Chromosome"/>
</dbReference>
<dbReference type="GO" id="GO:0042781">
    <property type="term" value="F:3'-tRNA processing endoribonuclease activity"/>
    <property type="evidence" value="ECO:0007669"/>
    <property type="project" value="UniProtKB-UniRule"/>
</dbReference>
<dbReference type="GO" id="GO:0008270">
    <property type="term" value="F:zinc ion binding"/>
    <property type="evidence" value="ECO:0007669"/>
    <property type="project" value="UniProtKB-UniRule"/>
</dbReference>
<dbReference type="CDD" id="cd07717">
    <property type="entry name" value="RNaseZ_ZiPD-like_MBL-fold"/>
    <property type="match status" value="1"/>
</dbReference>
<dbReference type="Gene3D" id="3.60.15.10">
    <property type="entry name" value="Ribonuclease Z/Hydroxyacylglutathione hydrolase-like"/>
    <property type="match status" value="1"/>
</dbReference>
<dbReference type="HAMAP" id="MF_01818">
    <property type="entry name" value="RNase_Z_BN"/>
    <property type="match status" value="1"/>
</dbReference>
<dbReference type="InterPro" id="IPR001279">
    <property type="entry name" value="Metallo-B-lactamas"/>
</dbReference>
<dbReference type="InterPro" id="IPR036866">
    <property type="entry name" value="RibonucZ/Hydroxyglut_hydro"/>
</dbReference>
<dbReference type="InterPro" id="IPR013471">
    <property type="entry name" value="RNase_Z/BN"/>
</dbReference>
<dbReference type="NCBIfam" id="NF000801">
    <property type="entry name" value="PRK00055.1-3"/>
    <property type="match status" value="1"/>
</dbReference>
<dbReference type="NCBIfam" id="TIGR02651">
    <property type="entry name" value="RNase_Z"/>
    <property type="match status" value="1"/>
</dbReference>
<dbReference type="PANTHER" id="PTHR46018">
    <property type="entry name" value="ZINC PHOSPHODIESTERASE ELAC PROTEIN 1"/>
    <property type="match status" value="1"/>
</dbReference>
<dbReference type="PANTHER" id="PTHR46018:SF2">
    <property type="entry name" value="ZINC PHOSPHODIESTERASE ELAC PROTEIN 1"/>
    <property type="match status" value="1"/>
</dbReference>
<dbReference type="Pfam" id="PF00753">
    <property type="entry name" value="Lactamase_B"/>
    <property type="match status" value="1"/>
</dbReference>
<dbReference type="Pfam" id="PF12706">
    <property type="entry name" value="Lactamase_B_2"/>
    <property type="match status" value="1"/>
</dbReference>
<dbReference type="SUPFAM" id="SSF56281">
    <property type="entry name" value="Metallo-hydrolase/oxidoreductase"/>
    <property type="match status" value="1"/>
</dbReference>
<feature type="chain" id="PRO_0000155930" description="Ribonuclease Z">
    <location>
        <begin position="1"/>
        <end position="309"/>
    </location>
</feature>
<feature type="active site" description="Proton acceptor" evidence="1">
    <location>
        <position position="68"/>
    </location>
</feature>
<feature type="binding site" evidence="1">
    <location>
        <position position="64"/>
    </location>
    <ligand>
        <name>Zn(2+)</name>
        <dbReference type="ChEBI" id="CHEBI:29105"/>
        <label>1</label>
        <note>catalytic</note>
    </ligand>
</feature>
<feature type="binding site" evidence="1">
    <location>
        <position position="66"/>
    </location>
    <ligand>
        <name>Zn(2+)</name>
        <dbReference type="ChEBI" id="CHEBI:29105"/>
        <label>1</label>
        <note>catalytic</note>
    </ligand>
</feature>
<feature type="binding site" evidence="1">
    <location>
        <position position="68"/>
    </location>
    <ligand>
        <name>Zn(2+)</name>
        <dbReference type="ChEBI" id="CHEBI:29105"/>
        <label>2</label>
        <note>catalytic</note>
    </ligand>
</feature>
<feature type="binding site" evidence="1">
    <location>
        <position position="69"/>
    </location>
    <ligand>
        <name>Zn(2+)</name>
        <dbReference type="ChEBI" id="CHEBI:29105"/>
        <label>2</label>
        <note>catalytic</note>
    </ligand>
</feature>
<feature type="binding site" evidence="1">
    <location>
        <position position="141"/>
    </location>
    <ligand>
        <name>Zn(2+)</name>
        <dbReference type="ChEBI" id="CHEBI:29105"/>
        <label>1</label>
        <note>catalytic</note>
    </ligand>
</feature>
<feature type="binding site" evidence="1">
    <location>
        <position position="209"/>
    </location>
    <ligand>
        <name>Zn(2+)</name>
        <dbReference type="ChEBI" id="CHEBI:29105"/>
        <label>1</label>
        <note>catalytic</note>
    </ligand>
</feature>
<feature type="binding site" evidence="1">
    <location>
        <position position="209"/>
    </location>
    <ligand>
        <name>Zn(2+)</name>
        <dbReference type="ChEBI" id="CHEBI:29105"/>
        <label>2</label>
        <note>catalytic</note>
    </ligand>
</feature>
<feature type="binding site" evidence="1">
    <location>
        <position position="267"/>
    </location>
    <ligand>
        <name>Zn(2+)</name>
        <dbReference type="ChEBI" id="CHEBI:29105"/>
        <label>2</label>
        <note>catalytic</note>
    </ligand>
</feature>
<organism>
    <name type="scientific">Picrophilus torridus (strain ATCC 700027 / DSM 9790 / JCM 10055 / NBRC 100828 / KAW 2/3)</name>
    <dbReference type="NCBI Taxonomy" id="1122961"/>
    <lineage>
        <taxon>Archaea</taxon>
        <taxon>Methanobacteriati</taxon>
        <taxon>Thermoplasmatota</taxon>
        <taxon>Thermoplasmata</taxon>
        <taxon>Thermoplasmatales</taxon>
        <taxon>Picrophilaceae</taxon>
        <taxon>Picrophilus</taxon>
    </lineage>
</organism>
<proteinExistence type="inferred from homology"/>
<accession>Q6KZJ4</accession>